<comment type="function">
    <text evidence="1">Binds to 23S rRNA.</text>
</comment>
<comment type="subunit">
    <text evidence="1">Part of the 50S ribosomal subunit.</text>
</comment>
<comment type="subcellular location">
    <subcellularLocation>
        <location>Plastid</location>
        <location>Chloroplast</location>
    </subcellularLocation>
</comment>
<comment type="similarity">
    <text evidence="2">Belongs to the universal ribosomal protein uL23 family.</text>
</comment>
<keyword id="KW-0150">Chloroplast</keyword>
<keyword id="KW-0934">Plastid</keyword>
<keyword id="KW-0687">Ribonucleoprotein</keyword>
<keyword id="KW-0689">Ribosomal protein</keyword>
<keyword id="KW-0694">RNA-binding</keyword>
<keyword id="KW-0699">rRNA-binding</keyword>
<geneLocation type="chloroplast"/>
<proteinExistence type="inferred from homology"/>
<dbReference type="EMBL" id="AY835431">
    <property type="protein sequence ID" value="AAV80603.1"/>
    <property type="molecule type" value="Genomic_DNA"/>
</dbReference>
<dbReference type="RefSeq" id="YP_636179.1">
    <property type="nucleotide sequence ID" value="NC_008114.1"/>
</dbReference>
<dbReference type="SMR" id="Q3ZJ88"/>
<dbReference type="GeneID" id="4108783"/>
<dbReference type="GO" id="GO:0009507">
    <property type="term" value="C:chloroplast"/>
    <property type="evidence" value="ECO:0007669"/>
    <property type="project" value="UniProtKB-SubCell"/>
</dbReference>
<dbReference type="GO" id="GO:1990904">
    <property type="term" value="C:ribonucleoprotein complex"/>
    <property type="evidence" value="ECO:0007669"/>
    <property type="project" value="UniProtKB-KW"/>
</dbReference>
<dbReference type="GO" id="GO:0005840">
    <property type="term" value="C:ribosome"/>
    <property type="evidence" value="ECO:0007669"/>
    <property type="project" value="UniProtKB-KW"/>
</dbReference>
<dbReference type="GO" id="GO:0019843">
    <property type="term" value="F:rRNA binding"/>
    <property type="evidence" value="ECO:0007669"/>
    <property type="project" value="UniProtKB-UniRule"/>
</dbReference>
<dbReference type="GO" id="GO:0003735">
    <property type="term" value="F:structural constituent of ribosome"/>
    <property type="evidence" value="ECO:0007669"/>
    <property type="project" value="InterPro"/>
</dbReference>
<dbReference type="GO" id="GO:0006412">
    <property type="term" value="P:translation"/>
    <property type="evidence" value="ECO:0007669"/>
    <property type="project" value="UniProtKB-UniRule"/>
</dbReference>
<dbReference type="Gene3D" id="3.30.70.330">
    <property type="match status" value="1"/>
</dbReference>
<dbReference type="HAMAP" id="MF_01369_B">
    <property type="entry name" value="Ribosomal_uL23_B"/>
    <property type="match status" value="1"/>
</dbReference>
<dbReference type="InterPro" id="IPR012677">
    <property type="entry name" value="Nucleotide-bd_a/b_plait_sf"/>
</dbReference>
<dbReference type="InterPro" id="IPR013025">
    <property type="entry name" value="Ribosomal_uL23-like"/>
</dbReference>
<dbReference type="InterPro" id="IPR012678">
    <property type="entry name" value="Ribosomal_uL23/eL15/eS24_sf"/>
</dbReference>
<dbReference type="NCBIfam" id="NF004363">
    <property type="entry name" value="PRK05738.2-4"/>
    <property type="match status" value="1"/>
</dbReference>
<dbReference type="PANTHER" id="PTHR11620">
    <property type="entry name" value="60S RIBOSOMAL PROTEIN L23A"/>
    <property type="match status" value="1"/>
</dbReference>
<dbReference type="Pfam" id="PF00276">
    <property type="entry name" value="Ribosomal_L23"/>
    <property type="match status" value="1"/>
</dbReference>
<dbReference type="SUPFAM" id="SSF54189">
    <property type="entry name" value="Ribosomal proteins S24e, L23 and L15e"/>
    <property type="match status" value="1"/>
</dbReference>
<organism>
    <name type="scientific">Tupiella akineta</name>
    <name type="common">Green alga</name>
    <name type="synonym">Pseudendoclonium akinetum</name>
    <dbReference type="NCBI Taxonomy" id="160070"/>
    <lineage>
        <taxon>Eukaryota</taxon>
        <taxon>Viridiplantae</taxon>
        <taxon>Chlorophyta</taxon>
        <taxon>Ulvophyceae</taxon>
        <taxon>OUU clade</taxon>
        <taxon>Ulotrichales</taxon>
        <taxon>Tupiellaceae</taxon>
        <taxon>Tupiella</taxon>
    </lineage>
</organism>
<gene>
    <name type="primary">rpl23</name>
</gene>
<feature type="chain" id="PRO_0000272928" description="Large ribosomal subunit protein uL23c">
    <location>
        <begin position="1"/>
        <end position="94"/>
    </location>
</feature>
<evidence type="ECO:0000250" key="1"/>
<evidence type="ECO:0000305" key="2"/>
<sequence>MIDLVKYPVSTEKSYRLIEKNQYTFDVDVRLTKPQIRKVFENLFDIKVLAVNTHLLPTKKKRLGLNLGFKTRYKRAIITIKANQTIPIFENSDS</sequence>
<accession>Q3ZJ88</accession>
<name>RK23_TUPAK</name>
<reference key="1">
    <citation type="journal article" date="2005" name="Mol. Biol. Evol.">
        <title>The chloroplast genome sequence of the green alga Pseudendoclonium akinetum (Ulvophyceae) reveals unusual structural features and new insights into the branching order of chlorophyte lineages.</title>
        <authorList>
            <person name="Pombert J.-F."/>
            <person name="Otis C."/>
            <person name="Lemieux C."/>
            <person name="Turmel M."/>
        </authorList>
    </citation>
    <scope>NUCLEOTIDE SEQUENCE [LARGE SCALE GENOMIC DNA]</scope>
    <source>
        <strain>UTEX 1912</strain>
    </source>
</reference>
<protein>
    <recommendedName>
        <fullName evidence="2">Large ribosomal subunit protein uL23c</fullName>
    </recommendedName>
    <alternativeName>
        <fullName>50S ribosomal protein L23, chloroplastic</fullName>
    </alternativeName>
</protein>